<feature type="chain" id="PRO_0000050385" description="Glucose transporter 1E">
    <location>
        <begin position="1"/>
        <end position="528"/>
    </location>
</feature>
<feature type="topological domain" description="Cytoplasmic" evidence="1">
    <location>
        <begin position="1"/>
        <end position="43"/>
    </location>
</feature>
<feature type="transmembrane region" description="Helical; Name=1" evidence="1">
    <location>
        <begin position="44"/>
        <end position="64"/>
    </location>
</feature>
<feature type="topological domain" description="Extracellular" evidence="1">
    <location>
        <begin position="65"/>
        <end position="118"/>
    </location>
</feature>
<feature type="transmembrane region" description="Helical; Name=2" evidence="1">
    <location>
        <begin position="119"/>
        <end position="139"/>
    </location>
</feature>
<feature type="topological domain" description="Cytoplasmic" evidence="1">
    <location>
        <begin position="140"/>
        <end position="151"/>
    </location>
</feature>
<feature type="transmembrane region" description="Helical; Name=3" evidence="1">
    <location>
        <begin position="152"/>
        <end position="172"/>
    </location>
</feature>
<feature type="topological domain" description="Extracellular" evidence="1">
    <location>
        <begin position="173"/>
        <end position="175"/>
    </location>
</feature>
<feature type="transmembrane region" description="Helical; Name=4" evidence="1">
    <location>
        <begin position="176"/>
        <end position="196"/>
    </location>
</feature>
<feature type="topological domain" description="Cytoplasmic" evidence="1">
    <location>
        <begin position="197"/>
        <end position="213"/>
    </location>
</feature>
<feature type="transmembrane region" description="Helical; Name=5" evidence="1">
    <location>
        <begin position="214"/>
        <end position="234"/>
    </location>
</feature>
<feature type="topological domain" description="Extracellular" evidence="1">
    <location>
        <begin position="235"/>
        <end position="250"/>
    </location>
</feature>
<feature type="transmembrane region" description="Helical; Name=6" evidence="1">
    <location>
        <begin position="251"/>
        <end position="271"/>
    </location>
</feature>
<feature type="topological domain" description="Cytoplasmic" evidence="1">
    <location>
        <begin position="272"/>
        <end position="301"/>
    </location>
</feature>
<feature type="transmembrane region" description="Helical; Name=7" evidence="1">
    <location>
        <begin position="302"/>
        <end position="322"/>
    </location>
</feature>
<feature type="topological domain" description="Extracellular" evidence="1">
    <location>
        <begin position="323"/>
        <end position="338"/>
    </location>
</feature>
<feature type="transmembrane region" description="Helical; Name=8" evidence="1">
    <location>
        <begin position="339"/>
        <end position="359"/>
    </location>
</feature>
<feature type="topological domain" description="Cytoplasmic" evidence="1">
    <location>
        <begin position="360"/>
        <end position="367"/>
    </location>
</feature>
<feature type="transmembrane region" description="Helical; Name=9" evidence="1">
    <location>
        <begin position="368"/>
        <end position="388"/>
    </location>
</feature>
<feature type="topological domain" description="Extracellular" evidence="1">
    <location>
        <begin position="389"/>
        <end position="403"/>
    </location>
</feature>
<feature type="transmembrane region" description="Helical; Name=10" evidence="1">
    <location>
        <begin position="404"/>
        <end position="424"/>
    </location>
</feature>
<feature type="topological domain" description="Cytoplasmic" evidence="1">
    <location>
        <begin position="425"/>
        <end position="438"/>
    </location>
</feature>
<feature type="transmembrane region" description="Helical; Name=11" evidence="1">
    <location>
        <begin position="439"/>
        <end position="459"/>
    </location>
</feature>
<feature type="topological domain" description="Extracellular" evidence="1">
    <location>
        <begin position="460"/>
        <end position="475"/>
    </location>
</feature>
<feature type="transmembrane region" description="Helical; Name=12" evidence="1">
    <location>
        <begin position="476"/>
        <end position="496"/>
    </location>
</feature>
<feature type="topological domain" description="Cytoplasmic" evidence="1">
    <location>
        <begin position="497"/>
        <end position="528"/>
    </location>
</feature>
<feature type="region of interest" description="Disordered" evidence="2">
    <location>
        <begin position="1"/>
        <end position="22"/>
    </location>
</feature>
<feature type="region of interest" description="Disordered" evidence="2">
    <location>
        <begin position="507"/>
        <end position="528"/>
    </location>
</feature>
<accession>Q09037</accession>
<reference key="1">
    <citation type="journal article" date="1993" name="Mol. Cell. Biol.">
        <title>Differential regulation of two distinct families of glucose transporter genes in Trypanosoma brucei.</title>
        <authorList>
            <person name="Bringaud F."/>
            <person name="Baltz T."/>
        </authorList>
    </citation>
    <scope>NUCLEOTIDE SEQUENCE [GENOMIC DNA]</scope>
    <source>
        <strain>EATRO 164</strain>
    </source>
</reference>
<dbReference type="EMBL" id="X69091">
    <property type="protein sequence ID" value="CAA48837.1"/>
    <property type="molecule type" value="Genomic_DNA"/>
</dbReference>
<dbReference type="SMR" id="Q09037"/>
<dbReference type="GO" id="GO:0051286">
    <property type="term" value="C:cell tip"/>
    <property type="evidence" value="ECO:0000314"/>
    <property type="project" value="GeneDB"/>
</dbReference>
<dbReference type="GO" id="GO:0005886">
    <property type="term" value="C:plasma membrane"/>
    <property type="evidence" value="ECO:0000314"/>
    <property type="project" value="GeneDB"/>
</dbReference>
<dbReference type="GO" id="GO:0015149">
    <property type="term" value="F:hexose transmembrane transporter activity"/>
    <property type="evidence" value="ECO:0007669"/>
    <property type="project" value="TreeGrafter"/>
</dbReference>
<dbReference type="CDD" id="cd17315">
    <property type="entry name" value="MFS_GLUT_like"/>
    <property type="match status" value="1"/>
</dbReference>
<dbReference type="FunFam" id="1.20.1250.20:FF:000857">
    <property type="entry name" value="Glucose transporter 1B/1C/1D/1F/2B"/>
    <property type="match status" value="1"/>
</dbReference>
<dbReference type="FunFam" id="1.20.1250.20:FF:000357">
    <property type="entry name" value="Glucose transporter, lmgt1"/>
    <property type="match status" value="1"/>
</dbReference>
<dbReference type="Gene3D" id="1.20.1250.20">
    <property type="entry name" value="MFS general substrate transporter like domains"/>
    <property type="match status" value="2"/>
</dbReference>
<dbReference type="InterPro" id="IPR045263">
    <property type="entry name" value="GLUT"/>
</dbReference>
<dbReference type="InterPro" id="IPR020846">
    <property type="entry name" value="MFS_dom"/>
</dbReference>
<dbReference type="InterPro" id="IPR005828">
    <property type="entry name" value="MFS_sugar_transport-like"/>
</dbReference>
<dbReference type="InterPro" id="IPR036259">
    <property type="entry name" value="MFS_trans_sf"/>
</dbReference>
<dbReference type="InterPro" id="IPR003663">
    <property type="entry name" value="Sugar/inositol_transpt"/>
</dbReference>
<dbReference type="NCBIfam" id="TIGR00879">
    <property type="entry name" value="SP"/>
    <property type="match status" value="1"/>
</dbReference>
<dbReference type="PANTHER" id="PTHR23503:SF8">
    <property type="entry name" value="FACILITATED GLUCOSE TRANSPORTER PROTEIN 1"/>
    <property type="match status" value="1"/>
</dbReference>
<dbReference type="PANTHER" id="PTHR23503">
    <property type="entry name" value="SOLUTE CARRIER FAMILY 2"/>
    <property type="match status" value="1"/>
</dbReference>
<dbReference type="Pfam" id="PF00083">
    <property type="entry name" value="Sugar_tr"/>
    <property type="match status" value="1"/>
</dbReference>
<dbReference type="PRINTS" id="PR00171">
    <property type="entry name" value="SUGRTRNSPORT"/>
</dbReference>
<dbReference type="SUPFAM" id="SSF103473">
    <property type="entry name" value="MFS general substrate transporter"/>
    <property type="match status" value="1"/>
</dbReference>
<dbReference type="PROSITE" id="PS50850">
    <property type="entry name" value="MFS"/>
    <property type="match status" value="1"/>
</dbReference>
<protein>
    <recommendedName>
        <fullName>Glucose transporter 1E</fullName>
    </recommendedName>
</protein>
<keyword id="KW-0472">Membrane</keyword>
<keyword id="KW-0762">Sugar transport</keyword>
<keyword id="KW-0812">Transmembrane</keyword>
<keyword id="KW-1133">Transmembrane helix</keyword>
<keyword id="KW-0813">Transport</keyword>
<gene>
    <name type="primary">THT1E</name>
</gene>
<proteinExistence type="evidence at transcript level"/>
<organism>
    <name type="scientific">Trypanosoma brucei brucei</name>
    <dbReference type="NCBI Taxonomy" id="5702"/>
    <lineage>
        <taxon>Eukaryota</taxon>
        <taxon>Discoba</taxon>
        <taxon>Euglenozoa</taxon>
        <taxon>Kinetoplastea</taxon>
        <taxon>Metakinetoplastina</taxon>
        <taxon>Trypanosomatida</taxon>
        <taxon>Trypanosomatidae</taxon>
        <taxon>Trypanosoma</taxon>
    </lineage>
</organism>
<evidence type="ECO:0000255" key="1"/>
<evidence type="ECO:0000256" key="2">
    <source>
        <dbReference type="SAM" id="MobiDB-lite"/>
    </source>
</evidence>
<evidence type="ECO:0000305" key="3"/>
<sequence length="528" mass="56827">MTERRDNVSHAPDAIEGPNDGAHAEETSPGFFSFENLGVAQVQVVGGTLNGYVIGYVAVYLLLYLTATECKFTTEGACGGRKIYGCKWSGTTCKFENPKCSEGSDPSDSCKNEVAYTSVYSGIFACAMIVGSMVGSIIAGKCITTFGLKKSFIIVSITCTIACVVVQVAIEYNNYYALCTGRVLIGLGVGILCSVFPMYVNENAHPKLCKMDGVLFQVFTTLGIMLAAMLGLILDKTGASKEEANMAGRLHVFSAVPLGLSVAMFLVGMFLRESTATFAQDDDGKADGGMDPNEYGWGQMLWPLFMGAVTAGTLQLTGINAVMNYAPKITENLGMDPSLGNFLVMAWNFVTSLVAIPLASRFTMRQMFITCSFVASCMCLFLCGIPVFPGVAEEKVKNGVATTGIALFIAAFEFGVGSCFFVLAQDLFPPSFRPKGSSFVVMMQFIFNILINLLYPITTEAISGGATGDQDKGQAVVFILFGLIGLICFVLQFFYLYPYDANQDHENDHGTEPVERILSPVDVPTPRN</sequence>
<name>TH12_TRYBB</name>
<comment type="function">
    <text>Facilitative glucose transporter.</text>
</comment>
<comment type="subcellular location">
    <subcellularLocation>
        <location>Membrane</location>
        <topology>Multi-pass membrane protein</topology>
    </subcellularLocation>
</comment>
<comment type="developmental stage">
    <text>Expressed specifically in bloodstream forms.</text>
</comment>
<comment type="similarity">
    <text evidence="3">Belongs to the major facilitator superfamily. Sugar transporter (TC 2.A.1.1) family.</text>
</comment>